<protein>
    <recommendedName>
        <fullName evidence="1">Pyridoxal 5'-phosphate synthase subunit PdxT</fullName>
        <ecNumber evidence="1">4.3.3.6</ecNumber>
    </recommendedName>
    <alternativeName>
        <fullName evidence="1">Pdx2</fullName>
    </alternativeName>
    <alternativeName>
        <fullName evidence="1">Pyridoxal 5'-phosphate synthase glutaminase subunit</fullName>
        <ecNumber evidence="1">3.5.1.2</ecNumber>
    </alternativeName>
</protein>
<evidence type="ECO:0000255" key="1">
    <source>
        <dbReference type="HAMAP-Rule" id="MF_01615"/>
    </source>
</evidence>
<feature type="chain" id="PRO_0000293024" description="Pyridoxal 5'-phosphate synthase subunit PdxT">
    <location>
        <begin position="1"/>
        <end position="205"/>
    </location>
</feature>
<feature type="active site" description="Nucleophile" evidence="1">
    <location>
        <position position="84"/>
    </location>
</feature>
<feature type="active site" description="Charge relay system" evidence="1">
    <location>
        <position position="185"/>
    </location>
</feature>
<feature type="active site" description="Charge relay system" evidence="1">
    <location>
        <position position="187"/>
    </location>
</feature>
<feature type="binding site" evidence="1">
    <location>
        <begin position="52"/>
        <end position="54"/>
    </location>
    <ligand>
        <name>L-glutamine</name>
        <dbReference type="ChEBI" id="CHEBI:58359"/>
    </ligand>
</feature>
<feature type="binding site" evidence="1">
    <location>
        <position position="116"/>
    </location>
    <ligand>
        <name>L-glutamine</name>
        <dbReference type="ChEBI" id="CHEBI:58359"/>
    </ligand>
</feature>
<feature type="binding site" evidence="1">
    <location>
        <begin position="145"/>
        <end position="146"/>
    </location>
    <ligand>
        <name>L-glutamine</name>
        <dbReference type="ChEBI" id="CHEBI:58359"/>
    </ligand>
</feature>
<gene>
    <name evidence="1" type="primary">pdxT</name>
    <name type="ordered locus">Smar_0585</name>
</gene>
<keyword id="KW-0315">Glutamine amidotransferase</keyword>
<keyword id="KW-0378">Hydrolase</keyword>
<keyword id="KW-0456">Lyase</keyword>
<keyword id="KW-0663">Pyridoxal phosphate</keyword>
<keyword id="KW-1185">Reference proteome</keyword>
<name>PDXT_STAMF</name>
<proteinExistence type="inferred from homology"/>
<dbReference type="EC" id="4.3.3.6" evidence="1"/>
<dbReference type="EC" id="3.5.1.2" evidence="1"/>
<dbReference type="EMBL" id="CP000575">
    <property type="protein sequence ID" value="ABN69692.1"/>
    <property type="molecule type" value="Genomic_DNA"/>
</dbReference>
<dbReference type="RefSeq" id="WP_011838883.1">
    <property type="nucleotide sequence ID" value="NC_009033.1"/>
</dbReference>
<dbReference type="SMR" id="A3DM32"/>
<dbReference type="STRING" id="399550.Smar_0585"/>
<dbReference type="MEROPS" id="C26.A32"/>
<dbReference type="GeneID" id="4908027"/>
<dbReference type="KEGG" id="smr:Smar_0585"/>
<dbReference type="eggNOG" id="arCOG00034">
    <property type="taxonomic scope" value="Archaea"/>
</dbReference>
<dbReference type="HOGENOM" id="CLU_069674_2_0_2"/>
<dbReference type="OrthoDB" id="26717at2157"/>
<dbReference type="UniPathway" id="UPA00245"/>
<dbReference type="Proteomes" id="UP000000254">
    <property type="component" value="Chromosome"/>
</dbReference>
<dbReference type="GO" id="GO:0005829">
    <property type="term" value="C:cytosol"/>
    <property type="evidence" value="ECO:0007669"/>
    <property type="project" value="TreeGrafter"/>
</dbReference>
<dbReference type="GO" id="GO:1903600">
    <property type="term" value="C:glutaminase complex"/>
    <property type="evidence" value="ECO:0007669"/>
    <property type="project" value="TreeGrafter"/>
</dbReference>
<dbReference type="GO" id="GO:0004359">
    <property type="term" value="F:glutaminase activity"/>
    <property type="evidence" value="ECO:0007669"/>
    <property type="project" value="UniProtKB-UniRule"/>
</dbReference>
<dbReference type="GO" id="GO:0036381">
    <property type="term" value="F:pyridoxal 5'-phosphate synthase (glutamine hydrolysing) activity"/>
    <property type="evidence" value="ECO:0007669"/>
    <property type="project" value="UniProtKB-UniRule"/>
</dbReference>
<dbReference type="GO" id="GO:0006543">
    <property type="term" value="P:glutamine catabolic process"/>
    <property type="evidence" value="ECO:0007669"/>
    <property type="project" value="UniProtKB-UniRule"/>
</dbReference>
<dbReference type="GO" id="GO:0042823">
    <property type="term" value="P:pyridoxal phosphate biosynthetic process"/>
    <property type="evidence" value="ECO:0007669"/>
    <property type="project" value="UniProtKB-UniRule"/>
</dbReference>
<dbReference type="GO" id="GO:0008614">
    <property type="term" value="P:pyridoxine metabolic process"/>
    <property type="evidence" value="ECO:0007669"/>
    <property type="project" value="TreeGrafter"/>
</dbReference>
<dbReference type="CDD" id="cd01749">
    <property type="entry name" value="GATase1_PB"/>
    <property type="match status" value="1"/>
</dbReference>
<dbReference type="FunFam" id="3.40.50.880:FF:000041">
    <property type="entry name" value="Glutamine amidotransferase subunit pdxT, putative"/>
    <property type="match status" value="1"/>
</dbReference>
<dbReference type="Gene3D" id="3.40.50.880">
    <property type="match status" value="1"/>
</dbReference>
<dbReference type="HAMAP" id="MF_01615">
    <property type="entry name" value="PdxT"/>
    <property type="match status" value="1"/>
</dbReference>
<dbReference type="InterPro" id="IPR029062">
    <property type="entry name" value="Class_I_gatase-like"/>
</dbReference>
<dbReference type="InterPro" id="IPR002161">
    <property type="entry name" value="PdxT/SNO"/>
</dbReference>
<dbReference type="InterPro" id="IPR021196">
    <property type="entry name" value="PdxT/SNO_CS"/>
</dbReference>
<dbReference type="NCBIfam" id="TIGR03800">
    <property type="entry name" value="PLP_synth_Pdx2"/>
    <property type="match status" value="1"/>
</dbReference>
<dbReference type="PANTHER" id="PTHR31559">
    <property type="entry name" value="PYRIDOXAL 5'-PHOSPHATE SYNTHASE SUBUNIT SNO"/>
    <property type="match status" value="1"/>
</dbReference>
<dbReference type="PANTHER" id="PTHR31559:SF0">
    <property type="entry name" value="PYRIDOXAL 5'-PHOSPHATE SYNTHASE SUBUNIT SNO1-RELATED"/>
    <property type="match status" value="1"/>
</dbReference>
<dbReference type="Pfam" id="PF01174">
    <property type="entry name" value="SNO"/>
    <property type="match status" value="1"/>
</dbReference>
<dbReference type="PIRSF" id="PIRSF005639">
    <property type="entry name" value="Glut_amidoT_SNO"/>
    <property type="match status" value="1"/>
</dbReference>
<dbReference type="SUPFAM" id="SSF52317">
    <property type="entry name" value="Class I glutamine amidotransferase-like"/>
    <property type="match status" value="1"/>
</dbReference>
<dbReference type="PROSITE" id="PS01236">
    <property type="entry name" value="PDXT_SNO_1"/>
    <property type="match status" value="1"/>
</dbReference>
<dbReference type="PROSITE" id="PS51130">
    <property type="entry name" value="PDXT_SNO_2"/>
    <property type="match status" value="1"/>
</dbReference>
<comment type="function">
    <text evidence="1">Catalyzes the hydrolysis of glutamine to glutamate and ammonia as part of the biosynthesis of pyridoxal 5'-phosphate. The resulting ammonia molecule is channeled to the active site of PdxS.</text>
</comment>
<comment type="catalytic activity">
    <reaction evidence="1">
        <text>aldehydo-D-ribose 5-phosphate + D-glyceraldehyde 3-phosphate + L-glutamine = pyridoxal 5'-phosphate + L-glutamate + phosphate + 3 H2O + H(+)</text>
        <dbReference type="Rhea" id="RHEA:31507"/>
        <dbReference type="ChEBI" id="CHEBI:15377"/>
        <dbReference type="ChEBI" id="CHEBI:15378"/>
        <dbReference type="ChEBI" id="CHEBI:29985"/>
        <dbReference type="ChEBI" id="CHEBI:43474"/>
        <dbReference type="ChEBI" id="CHEBI:58273"/>
        <dbReference type="ChEBI" id="CHEBI:58359"/>
        <dbReference type="ChEBI" id="CHEBI:59776"/>
        <dbReference type="ChEBI" id="CHEBI:597326"/>
        <dbReference type="EC" id="4.3.3.6"/>
    </reaction>
</comment>
<comment type="catalytic activity">
    <reaction evidence="1">
        <text>L-glutamine + H2O = L-glutamate + NH4(+)</text>
        <dbReference type="Rhea" id="RHEA:15889"/>
        <dbReference type="ChEBI" id="CHEBI:15377"/>
        <dbReference type="ChEBI" id="CHEBI:28938"/>
        <dbReference type="ChEBI" id="CHEBI:29985"/>
        <dbReference type="ChEBI" id="CHEBI:58359"/>
        <dbReference type="EC" id="3.5.1.2"/>
    </reaction>
</comment>
<comment type="pathway">
    <text evidence="1">Cofactor biosynthesis; pyridoxal 5'-phosphate biosynthesis.</text>
</comment>
<comment type="subunit">
    <text evidence="1">In the presence of PdxS, forms a dodecamer of heterodimers. Only shows activity in the heterodimer.</text>
</comment>
<comment type="similarity">
    <text evidence="1">Belongs to the glutaminase PdxT/SNO family.</text>
</comment>
<organism>
    <name type="scientific">Staphylothermus marinus (strain ATCC 43588 / DSM 3639 / JCM 9404 / F1)</name>
    <dbReference type="NCBI Taxonomy" id="399550"/>
    <lineage>
        <taxon>Archaea</taxon>
        <taxon>Thermoproteota</taxon>
        <taxon>Thermoprotei</taxon>
        <taxon>Desulfurococcales</taxon>
        <taxon>Desulfurococcaceae</taxon>
        <taxon>Staphylothermus</taxon>
    </lineage>
</organism>
<sequence length="205" mass="22954">MRIGVLGFQGGVYEHVYMLKKSFHELGINGKVLIVKKPQQLHDLDGIIIPGGESTTISILARKTNVLELLREKIVEGLPVMGVCAGAIMLAKEVVDQVVGETKQPLLGVMDIAVTRNYFGRQRESFELDIVLDELDDKPFRAVFIRAPAITKYWGATKPIGIINYNGEKVVVAARENNKLALSFHPELTSDTRIHRYFIEKIIKK</sequence>
<accession>A3DM32</accession>
<reference key="1">
    <citation type="journal article" date="2009" name="BMC Genomics">
        <title>The complete genome sequence of Staphylothermus marinus reveals differences in sulfur metabolism among heterotrophic Crenarchaeota.</title>
        <authorList>
            <person name="Anderson I.J."/>
            <person name="Dharmarajan L."/>
            <person name="Rodriguez J."/>
            <person name="Hooper S."/>
            <person name="Porat I."/>
            <person name="Ulrich L.E."/>
            <person name="Elkins J.G."/>
            <person name="Mavromatis K."/>
            <person name="Sun H."/>
            <person name="Land M."/>
            <person name="Lapidus A."/>
            <person name="Lucas S."/>
            <person name="Barry K."/>
            <person name="Huber H."/>
            <person name="Zhulin I.B."/>
            <person name="Whitman W.B."/>
            <person name="Mukhopadhyay B."/>
            <person name="Woese C."/>
            <person name="Bristow J."/>
            <person name="Kyrpides N."/>
        </authorList>
    </citation>
    <scope>NUCLEOTIDE SEQUENCE [LARGE SCALE GENOMIC DNA]</scope>
    <source>
        <strain>ATCC 43588 / DSM 3639 / JCM 9404 / F1</strain>
    </source>
</reference>
<reference key="2">
    <citation type="journal article" date="2009" name="Stand. Genomic Sci.">
        <title>Complete genome sequence of Staphylothermus marinus Stetter and Fiala 1986 type strain F1.</title>
        <authorList>
            <person name="Anderson I.J."/>
            <person name="Sun H."/>
            <person name="Lapidus A."/>
            <person name="Copeland A."/>
            <person name="Glavina Del Rio T."/>
            <person name="Tice H."/>
            <person name="Dalin E."/>
            <person name="Lucas S."/>
            <person name="Barry K."/>
            <person name="Land M."/>
            <person name="Richardson P."/>
            <person name="Huber H."/>
            <person name="Kyrpides N.C."/>
        </authorList>
    </citation>
    <scope>NUCLEOTIDE SEQUENCE [LARGE SCALE GENOMIC DNA]</scope>
    <source>
        <strain>ATCC 43588 / DSM 3639 / JCM 9404 / F1</strain>
    </source>
</reference>